<feature type="chain" id="PRO_1000194947" description="Ribosome-recycling factor">
    <location>
        <begin position="1"/>
        <end position="188"/>
    </location>
</feature>
<proteinExistence type="inferred from homology"/>
<evidence type="ECO:0000255" key="1">
    <source>
        <dbReference type="HAMAP-Rule" id="MF_00040"/>
    </source>
</evidence>
<sequence length="188" mass="20994">MSQDDLEIDLDAIQRRMDGAMHALRTEFGSLRTGRASASILEPIHVDAYGQQTPLNQLGTINVPEPRMVVINVWDKGMISKVERAIRDSGIGINPVVDGPIIRLPIPELNEERRKELSKVAAHYAEQARVAIRNVRRDGMDQIKKAKSAGMAEDDQKMWSDEVQALTDKAIAAVDKALEEKQKEIMQV</sequence>
<accession>B9KRU0</accession>
<name>RRF_CERSK</name>
<protein>
    <recommendedName>
        <fullName evidence="1">Ribosome-recycling factor</fullName>
        <shortName evidence="1">RRF</shortName>
    </recommendedName>
    <alternativeName>
        <fullName evidence="1">Ribosome-releasing factor</fullName>
    </alternativeName>
</protein>
<keyword id="KW-0963">Cytoplasm</keyword>
<keyword id="KW-0648">Protein biosynthesis</keyword>
<organism>
    <name type="scientific">Cereibacter sphaeroides (strain KD131 / KCTC 12085)</name>
    <name type="common">Rhodobacter sphaeroides</name>
    <dbReference type="NCBI Taxonomy" id="557760"/>
    <lineage>
        <taxon>Bacteria</taxon>
        <taxon>Pseudomonadati</taxon>
        <taxon>Pseudomonadota</taxon>
        <taxon>Alphaproteobacteria</taxon>
        <taxon>Rhodobacterales</taxon>
        <taxon>Paracoccaceae</taxon>
        <taxon>Cereibacter</taxon>
    </lineage>
</organism>
<dbReference type="EMBL" id="CP001150">
    <property type="protein sequence ID" value="ACM00882.1"/>
    <property type="molecule type" value="Genomic_DNA"/>
</dbReference>
<dbReference type="RefSeq" id="WP_002719856.1">
    <property type="nucleotide sequence ID" value="NC_011963.1"/>
</dbReference>
<dbReference type="SMR" id="B9KRU0"/>
<dbReference type="GeneID" id="67446455"/>
<dbReference type="KEGG" id="rsk:RSKD131_1022"/>
<dbReference type="HOGENOM" id="CLU_073981_2_0_5"/>
<dbReference type="GO" id="GO:0005829">
    <property type="term" value="C:cytosol"/>
    <property type="evidence" value="ECO:0007669"/>
    <property type="project" value="GOC"/>
</dbReference>
<dbReference type="GO" id="GO:0043023">
    <property type="term" value="F:ribosomal large subunit binding"/>
    <property type="evidence" value="ECO:0007669"/>
    <property type="project" value="TreeGrafter"/>
</dbReference>
<dbReference type="GO" id="GO:0002184">
    <property type="term" value="P:cytoplasmic translational termination"/>
    <property type="evidence" value="ECO:0007669"/>
    <property type="project" value="TreeGrafter"/>
</dbReference>
<dbReference type="CDD" id="cd00520">
    <property type="entry name" value="RRF"/>
    <property type="match status" value="1"/>
</dbReference>
<dbReference type="FunFam" id="1.10.132.20:FF:000001">
    <property type="entry name" value="Ribosome-recycling factor"/>
    <property type="match status" value="1"/>
</dbReference>
<dbReference type="FunFam" id="3.30.1360.40:FF:000001">
    <property type="entry name" value="Ribosome-recycling factor"/>
    <property type="match status" value="1"/>
</dbReference>
<dbReference type="Gene3D" id="3.30.1360.40">
    <property type="match status" value="1"/>
</dbReference>
<dbReference type="Gene3D" id="1.10.132.20">
    <property type="entry name" value="Ribosome-recycling factor"/>
    <property type="match status" value="1"/>
</dbReference>
<dbReference type="HAMAP" id="MF_00040">
    <property type="entry name" value="RRF"/>
    <property type="match status" value="1"/>
</dbReference>
<dbReference type="InterPro" id="IPR002661">
    <property type="entry name" value="Ribosome_recyc_fac"/>
</dbReference>
<dbReference type="InterPro" id="IPR023584">
    <property type="entry name" value="Ribosome_recyc_fac_dom"/>
</dbReference>
<dbReference type="InterPro" id="IPR036191">
    <property type="entry name" value="RRF_sf"/>
</dbReference>
<dbReference type="NCBIfam" id="TIGR00496">
    <property type="entry name" value="frr"/>
    <property type="match status" value="1"/>
</dbReference>
<dbReference type="PANTHER" id="PTHR20982:SF3">
    <property type="entry name" value="MITOCHONDRIAL RIBOSOME RECYCLING FACTOR PSEUDO 1"/>
    <property type="match status" value="1"/>
</dbReference>
<dbReference type="PANTHER" id="PTHR20982">
    <property type="entry name" value="RIBOSOME RECYCLING FACTOR"/>
    <property type="match status" value="1"/>
</dbReference>
<dbReference type="Pfam" id="PF01765">
    <property type="entry name" value="RRF"/>
    <property type="match status" value="1"/>
</dbReference>
<dbReference type="SUPFAM" id="SSF55194">
    <property type="entry name" value="Ribosome recycling factor, RRF"/>
    <property type="match status" value="1"/>
</dbReference>
<reference key="1">
    <citation type="journal article" date="2009" name="J. Bacteriol.">
        <title>Complete genome sequence of Rhodobacter sphaeroides KD131.</title>
        <authorList>
            <person name="Lim S.-K."/>
            <person name="Kim S.J."/>
            <person name="Cha S.H."/>
            <person name="Oh Y.-K."/>
            <person name="Rhee H.-J."/>
            <person name="Kim M.-S."/>
            <person name="Lee J.K."/>
        </authorList>
    </citation>
    <scope>NUCLEOTIDE SEQUENCE [LARGE SCALE GENOMIC DNA]</scope>
    <source>
        <strain>KD131 / KCTC 12085</strain>
    </source>
</reference>
<gene>
    <name evidence="1" type="primary">frr</name>
    <name type="ordered locus">RSKD131_1022</name>
</gene>
<comment type="function">
    <text evidence="1">Responsible for the release of ribosomes from messenger RNA at the termination of protein biosynthesis. May increase the efficiency of translation by recycling ribosomes from one round of translation to another.</text>
</comment>
<comment type="subcellular location">
    <subcellularLocation>
        <location evidence="1">Cytoplasm</location>
    </subcellularLocation>
</comment>
<comment type="similarity">
    <text evidence="1">Belongs to the RRF family.</text>
</comment>